<reference key="1">
    <citation type="journal article" date="2011" name="J. Bacteriol.">
        <title>Comparative genomics of 28 Salmonella enterica isolates: evidence for CRISPR-mediated adaptive sublineage evolution.</title>
        <authorList>
            <person name="Fricke W.F."/>
            <person name="Mammel M.K."/>
            <person name="McDermott P.F."/>
            <person name="Tartera C."/>
            <person name="White D.G."/>
            <person name="Leclerc J.E."/>
            <person name="Ravel J."/>
            <person name="Cebula T.A."/>
        </authorList>
    </citation>
    <scope>NUCLEOTIDE SEQUENCE [LARGE SCALE GENOMIC DNA]</scope>
    <source>
        <strain>SL483</strain>
    </source>
</reference>
<proteinExistence type="inferred from homology"/>
<organism>
    <name type="scientific">Salmonella agona (strain SL483)</name>
    <dbReference type="NCBI Taxonomy" id="454166"/>
    <lineage>
        <taxon>Bacteria</taxon>
        <taxon>Pseudomonadati</taxon>
        <taxon>Pseudomonadota</taxon>
        <taxon>Gammaproteobacteria</taxon>
        <taxon>Enterobacterales</taxon>
        <taxon>Enterobacteriaceae</taxon>
        <taxon>Salmonella</taxon>
    </lineage>
</organism>
<protein>
    <recommendedName>
        <fullName evidence="1">L-rhamnose-proton symporter</fullName>
    </recommendedName>
    <alternativeName>
        <fullName evidence="1">L-rhamnose-H(+) transport protein</fullName>
    </alternativeName>
</protein>
<comment type="function">
    <text evidence="1">Uptake of L-rhamnose across the cytoplasmic membrane with the concomitant transport of protons into the cell (symport system).</text>
</comment>
<comment type="catalytic activity">
    <reaction evidence="1">
        <text>L-rhamnopyranose(in) + H(+)(in) = L-rhamnopyranose(out) + H(+)(out)</text>
        <dbReference type="Rhea" id="RHEA:29947"/>
        <dbReference type="ChEBI" id="CHEBI:15378"/>
        <dbReference type="ChEBI" id="CHEBI:62346"/>
    </reaction>
    <physiologicalReaction direction="right-to-left" evidence="1">
        <dbReference type="Rhea" id="RHEA:29949"/>
    </physiologicalReaction>
</comment>
<comment type="subcellular location">
    <subcellularLocation>
        <location evidence="1">Cell inner membrane</location>
        <topology evidence="1">Multi-pass membrane protein</topology>
    </subcellularLocation>
</comment>
<comment type="similarity">
    <text evidence="1">Belongs to the L-rhamnose transporter (TC 2.A.7.6) family.</text>
</comment>
<gene>
    <name evidence="1" type="primary">rhaT</name>
    <name type="ordered locus">SeAg_B4293</name>
</gene>
<name>RHAT_SALA4</name>
<dbReference type="EMBL" id="CP001138">
    <property type="protein sequence ID" value="ACH49549.1"/>
    <property type="molecule type" value="Genomic_DNA"/>
</dbReference>
<dbReference type="RefSeq" id="WP_000063541.1">
    <property type="nucleotide sequence ID" value="NC_011149.1"/>
</dbReference>
<dbReference type="KEGG" id="sea:SeAg_B4293"/>
<dbReference type="HOGENOM" id="CLU_066437_0_0_6"/>
<dbReference type="Proteomes" id="UP000008819">
    <property type="component" value="Chromosome"/>
</dbReference>
<dbReference type="GO" id="GO:0005886">
    <property type="term" value="C:plasma membrane"/>
    <property type="evidence" value="ECO:0007669"/>
    <property type="project" value="UniProtKB-SubCell"/>
</dbReference>
<dbReference type="GO" id="GO:0015153">
    <property type="term" value="F:rhamnose transmembrane transporter activity"/>
    <property type="evidence" value="ECO:0007669"/>
    <property type="project" value="UniProtKB-UniRule"/>
</dbReference>
<dbReference type="GO" id="GO:0015293">
    <property type="term" value="F:symporter activity"/>
    <property type="evidence" value="ECO:0007669"/>
    <property type="project" value="UniProtKB-KW"/>
</dbReference>
<dbReference type="HAMAP" id="MF_01532">
    <property type="entry name" value="RhaT"/>
    <property type="match status" value="1"/>
</dbReference>
<dbReference type="InterPro" id="IPR004673">
    <property type="entry name" value="L-rhamnose-proton_sym_RhaT"/>
</dbReference>
<dbReference type="NCBIfam" id="NF010021">
    <property type="entry name" value="PRK13499.1-1"/>
    <property type="match status" value="1"/>
</dbReference>
<dbReference type="NCBIfam" id="NF010023">
    <property type="entry name" value="PRK13499.1-3"/>
    <property type="match status" value="1"/>
</dbReference>
<dbReference type="NCBIfam" id="TIGR00776">
    <property type="entry name" value="RhaT"/>
    <property type="match status" value="1"/>
</dbReference>
<dbReference type="Pfam" id="PF06379">
    <property type="entry name" value="RhaT"/>
    <property type="match status" value="1"/>
</dbReference>
<keyword id="KW-0997">Cell inner membrane</keyword>
<keyword id="KW-1003">Cell membrane</keyword>
<keyword id="KW-0472">Membrane</keyword>
<keyword id="KW-0762">Sugar transport</keyword>
<keyword id="KW-0769">Symport</keyword>
<keyword id="KW-0812">Transmembrane</keyword>
<keyword id="KW-1133">Transmembrane helix</keyword>
<keyword id="KW-0813">Transport</keyword>
<accession>B5F0N1</accession>
<evidence type="ECO:0000255" key="1">
    <source>
        <dbReference type="HAMAP-Rule" id="MF_01532"/>
    </source>
</evidence>
<feature type="chain" id="PRO_1000193751" description="L-rhamnose-proton symporter">
    <location>
        <begin position="1"/>
        <end position="344"/>
    </location>
</feature>
<feature type="transmembrane region" description="Helical" evidence="1">
    <location>
        <begin position="4"/>
        <end position="24"/>
    </location>
</feature>
<feature type="transmembrane region" description="Helical" evidence="1">
    <location>
        <begin position="38"/>
        <end position="58"/>
    </location>
</feature>
<feature type="transmembrane region" description="Helical" evidence="1">
    <location>
        <begin position="68"/>
        <end position="88"/>
    </location>
</feature>
<feature type="transmembrane region" description="Helical" evidence="1">
    <location>
        <begin position="101"/>
        <end position="121"/>
    </location>
</feature>
<feature type="transmembrane region" description="Helical" evidence="1">
    <location>
        <begin position="137"/>
        <end position="157"/>
    </location>
</feature>
<feature type="transmembrane region" description="Helical" evidence="1">
    <location>
        <begin position="175"/>
        <end position="195"/>
    </location>
</feature>
<feature type="transmembrane region" description="Helical" evidence="1">
    <location>
        <begin position="214"/>
        <end position="234"/>
    </location>
</feature>
<feature type="transmembrane region" description="Helical" evidence="1">
    <location>
        <begin position="259"/>
        <end position="279"/>
    </location>
</feature>
<feature type="transmembrane region" description="Helical" evidence="1">
    <location>
        <begin position="290"/>
        <end position="310"/>
    </location>
</feature>
<feature type="transmembrane region" description="Helical" evidence="1">
    <location>
        <begin position="321"/>
        <end position="341"/>
    </location>
</feature>
<sequence>MSNAITMGIFWHLIGAASAACFYAPFKQVKQWSWETMWSVGGIVSWLILPWTISALLLPDFWAYYGQFNLSTLLPVFLFGAMWGIGNINYGLTMRYLGMSMGIGIAIGITLIVGTLMTPIINGNFDVLIHTEGGRMTLLGVFVALIGVGIVTRAGQLKERKMGIKAEEFNLKKGLLLAVMCGIFSAGMSFAMNAAKPMHEAAAALGVDPLYVALPSYVVIMGGGALVNLGFCFIRLAKVQNLSIKADFSLARPLIISNILLSALGGLMWYLQFFFYAWGHARIPAQYDYMSWMLHMSFYVLCGGLVGLVLKEWKNAGRRPVAVLSLGCVVIIIAANIVGLGMAS</sequence>